<evidence type="ECO:0000255" key="1">
    <source>
        <dbReference type="HAMAP-Rule" id="MF_01549"/>
    </source>
</evidence>
<organism>
    <name type="scientific">Salmonella heidelberg (strain SL476)</name>
    <dbReference type="NCBI Taxonomy" id="454169"/>
    <lineage>
        <taxon>Bacteria</taxon>
        <taxon>Pseudomonadati</taxon>
        <taxon>Pseudomonadota</taxon>
        <taxon>Gammaproteobacteria</taxon>
        <taxon>Enterobacterales</taxon>
        <taxon>Enterobacteriaceae</taxon>
        <taxon>Salmonella</taxon>
    </lineage>
</organism>
<sequence>MKVNDRVTVKTDGGPRRPGVVLAVEEFSEGTMYLVSLEDYPLGIWFFNESGHQDGIFVEKAEQD</sequence>
<dbReference type="EMBL" id="CP001120">
    <property type="protein sequence ID" value="ACF68838.1"/>
    <property type="molecule type" value="Genomic_DNA"/>
</dbReference>
<dbReference type="RefSeq" id="WP_000867218.1">
    <property type="nucleotide sequence ID" value="NC_011083.1"/>
</dbReference>
<dbReference type="SMR" id="B4T8T9"/>
<dbReference type="KEGG" id="seh:SeHA_C2200"/>
<dbReference type="HOGENOM" id="CLU_189289_0_0_6"/>
<dbReference type="Proteomes" id="UP000001866">
    <property type="component" value="Chromosome"/>
</dbReference>
<dbReference type="HAMAP" id="MF_01549">
    <property type="entry name" value="DsrB"/>
    <property type="match status" value="1"/>
</dbReference>
<dbReference type="InterPro" id="IPR019717">
    <property type="entry name" value="Dextransucrase_DSRB"/>
</dbReference>
<dbReference type="NCBIfam" id="NF007981">
    <property type="entry name" value="PRK10708.1"/>
    <property type="match status" value="1"/>
</dbReference>
<dbReference type="Pfam" id="PF10781">
    <property type="entry name" value="DSRB"/>
    <property type="match status" value="1"/>
</dbReference>
<protein>
    <recommendedName>
        <fullName evidence="1">Protein DsrB</fullName>
    </recommendedName>
</protein>
<gene>
    <name evidence="1" type="primary">dsrB</name>
    <name type="ordered locus">SeHA_C2200</name>
</gene>
<reference key="1">
    <citation type="journal article" date="2011" name="J. Bacteriol.">
        <title>Comparative genomics of 28 Salmonella enterica isolates: evidence for CRISPR-mediated adaptive sublineage evolution.</title>
        <authorList>
            <person name="Fricke W.F."/>
            <person name="Mammel M.K."/>
            <person name="McDermott P.F."/>
            <person name="Tartera C."/>
            <person name="White D.G."/>
            <person name="Leclerc J.E."/>
            <person name="Ravel J."/>
            <person name="Cebula T.A."/>
        </authorList>
    </citation>
    <scope>NUCLEOTIDE SEQUENCE [LARGE SCALE GENOMIC DNA]</scope>
    <source>
        <strain>SL476</strain>
    </source>
</reference>
<comment type="similarity">
    <text evidence="1">Belongs to the DsrB family.</text>
</comment>
<accession>B4T8T9</accession>
<name>DSRB_SALHS</name>
<feature type="chain" id="PRO_1000146858" description="Protein DsrB">
    <location>
        <begin position="1"/>
        <end position="64"/>
    </location>
</feature>
<proteinExistence type="inferred from homology"/>